<comment type="catalytic activity">
    <reaction evidence="1">
        <text>5-amino-1-(5-phospho-D-ribosyl)imidazole-4-carboxylate + L-aspartate + ATP = (2S)-2-[5-amino-1-(5-phospho-beta-D-ribosyl)imidazole-4-carboxamido]succinate + ADP + phosphate + 2 H(+)</text>
        <dbReference type="Rhea" id="RHEA:22628"/>
        <dbReference type="ChEBI" id="CHEBI:15378"/>
        <dbReference type="ChEBI" id="CHEBI:29991"/>
        <dbReference type="ChEBI" id="CHEBI:30616"/>
        <dbReference type="ChEBI" id="CHEBI:43474"/>
        <dbReference type="ChEBI" id="CHEBI:58443"/>
        <dbReference type="ChEBI" id="CHEBI:77657"/>
        <dbReference type="ChEBI" id="CHEBI:456216"/>
        <dbReference type="EC" id="6.3.2.6"/>
    </reaction>
</comment>
<comment type="pathway">
    <text evidence="1">Purine metabolism; IMP biosynthesis via de novo pathway; 5-amino-1-(5-phospho-D-ribosyl)imidazole-4-carboxamide from 5-amino-1-(5-phospho-D-ribosyl)imidazole-4-carboxylate: step 1/2.</text>
</comment>
<comment type="similarity">
    <text evidence="1">Belongs to the SAICAR synthetase family.</text>
</comment>
<organism>
    <name type="scientific">Leptospira interrogans serogroup Icterohaemorrhagiae serovar copenhageni (strain Fiocruz L1-130)</name>
    <dbReference type="NCBI Taxonomy" id="267671"/>
    <lineage>
        <taxon>Bacteria</taxon>
        <taxon>Pseudomonadati</taxon>
        <taxon>Spirochaetota</taxon>
        <taxon>Spirochaetia</taxon>
        <taxon>Leptospirales</taxon>
        <taxon>Leptospiraceae</taxon>
        <taxon>Leptospira</taxon>
    </lineage>
</organism>
<feature type="chain" id="PRO_0000100837" description="Phosphoribosylaminoimidazole-succinocarboxamide synthase">
    <location>
        <begin position="1"/>
        <end position="285"/>
    </location>
</feature>
<proteinExistence type="inferred from homology"/>
<accession>Q72UH8</accession>
<evidence type="ECO:0000255" key="1">
    <source>
        <dbReference type="HAMAP-Rule" id="MF_00137"/>
    </source>
</evidence>
<name>PUR7_LEPIC</name>
<dbReference type="EC" id="6.3.2.6" evidence="1"/>
<dbReference type="EMBL" id="AE016823">
    <property type="protein sequence ID" value="AAS69300.1"/>
    <property type="molecule type" value="Genomic_DNA"/>
</dbReference>
<dbReference type="RefSeq" id="WP_001070066.1">
    <property type="nucleotide sequence ID" value="NC_005823.1"/>
</dbReference>
<dbReference type="SMR" id="Q72UH8"/>
<dbReference type="KEGG" id="lic:LIC_10679"/>
<dbReference type="HOGENOM" id="CLU_045637_0_0_12"/>
<dbReference type="UniPathway" id="UPA00074">
    <property type="reaction ID" value="UER00131"/>
</dbReference>
<dbReference type="Proteomes" id="UP000007037">
    <property type="component" value="Chromosome I"/>
</dbReference>
<dbReference type="GO" id="GO:0005737">
    <property type="term" value="C:cytoplasm"/>
    <property type="evidence" value="ECO:0007669"/>
    <property type="project" value="TreeGrafter"/>
</dbReference>
<dbReference type="GO" id="GO:0005524">
    <property type="term" value="F:ATP binding"/>
    <property type="evidence" value="ECO:0007669"/>
    <property type="project" value="UniProtKB-KW"/>
</dbReference>
<dbReference type="GO" id="GO:0004639">
    <property type="term" value="F:phosphoribosylaminoimidazolesuccinocarboxamide synthase activity"/>
    <property type="evidence" value="ECO:0007669"/>
    <property type="project" value="UniProtKB-UniRule"/>
</dbReference>
<dbReference type="GO" id="GO:0006189">
    <property type="term" value="P:'de novo' IMP biosynthetic process"/>
    <property type="evidence" value="ECO:0007669"/>
    <property type="project" value="UniProtKB-UniRule"/>
</dbReference>
<dbReference type="CDD" id="cd01414">
    <property type="entry name" value="SAICAR_synt_Sc"/>
    <property type="match status" value="1"/>
</dbReference>
<dbReference type="FunFam" id="3.30.470.20:FF:000015">
    <property type="entry name" value="Phosphoribosylaminoimidazole-succinocarboxamide synthase"/>
    <property type="match status" value="1"/>
</dbReference>
<dbReference type="Gene3D" id="3.30.470.20">
    <property type="entry name" value="ATP-grasp fold, B domain"/>
    <property type="match status" value="1"/>
</dbReference>
<dbReference type="Gene3D" id="3.30.200.20">
    <property type="entry name" value="Phosphorylase Kinase, domain 1"/>
    <property type="match status" value="1"/>
</dbReference>
<dbReference type="HAMAP" id="MF_00137">
    <property type="entry name" value="SAICAR_synth"/>
    <property type="match status" value="1"/>
</dbReference>
<dbReference type="InterPro" id="IPR028923">
    <property type="entry name" value="SAICAR_synt/ADE2_N"/>
</dbReference>
<dbReference type="InterPro" id="IPR001636">
    <property type="entry name" value="SAICAR_synth"/>
</dbReference>
<dbReference type="InterPro" id="IPR018236">
    <property type="entry name" value="SAICAR_synthetase_CS"/>
</dbReference>
<dbReference type="NCBIfam" id="NF010568">
    <property type="entry name" value="PRK13961.1"/>
    <property type="match status" value="1"/>
</dbReference>
<dbReference type="NCBIfam" id="TIGR00081">
    <property type="entry name" value="purC"/>
    <property type="match status" value="1"/>
</dbReference>
<dbReference type="PANTHER" id="PTHR43700">
    <property type="entry name" value="PHOSPHORIBOSYLAMINOIMIDAZOLE-SUCCINOCARBOXAMIDE SYNTHASE"/>
    <property type="match status" value="1"/>
</dbReference>
<dbReference type="PANTHER" id="PTHR43700:SF1">
    <property type="entry name" value="PHOSPHORIBOSYLAMINOIMIDAZOLE-SUCCINOCARBOXAMIDE SYNTHASE"/>
    <property type="match status" value="1"/>
</dbReference>
<dbReference type="Pfam" id="PF01259">
    <property type="entry name" value="SAICAR_synt"/>
    <property type="match status" value="1"/>
</dbReference>
<dbReference type="SUPFAM" id="SSF56104">
    <property type="entry name" value="SAICAR synthase-like"/>
    <property type="match status" value="1"/>
</dbReference>
<dbReference type="PROSITE" id="PS01058">
    <property type="entry name" value="SAICAR_SYNTHETASE_2"/>
    <property type="match status" value="1"/>
</dbReference>
<reference key="1">
    <citation type="journal article" date="2004" name="J. Bacteriol.">
        <title>Comparative genomics of two Leptospira interrogans serovars reveals novel insights into physiology and pathogenesis.</title>
        <authorList>
            <person name="Nascimento A.L.T.O."/>
            <person name="Ko A.I."/>
            <person name="Martins E.A.L."/>
            <person name="Monteiro-Vitorello C.B."/>
            <person name="Ho P.L."/>
            <person name="Haake D.A."/>
            <person name="Verjovski-Almeida S."/>
            <person name="Hartskeerl R.A."/>
            <person name="Marques M.V."/>
            <person name="Oliveira M.C."/>
            <person name="Menck C.F.M."/>
            <person name="Leite L.C.C."/>
            <person name="Carrer H."/>
            <person name="Coutinho L.L."/>
            <person name="Degrave W.M."/>
            <person name="Dellagostin O.A."/>
            <person name="El-Dorry H."/>
            <person name="Ferro E.S."/>
            <person name="Ferro M.I.T."/>
            <person name="Furlan L.R."/>
            <person name="Gamberini M."/>
            <person name="Giglioti E.A."/>
            <person name="Goes-Neto A."/>
            <person name="Goldman G.H."/>
            <person name="Goldman M.H.S."/>
            <person name="Harakava R."/>
            <person name="Jeronimo S.M.B."/>
            <person name="Junqueira-de-Azevedo I.L.M."/>
            <person name="Kimura E.T."/>
            <person name="Kuramae E.E."/>
            <person name="Lemos E.G.M."/>
            <person name="Lemos M.V.F."/>
            <person name="Marino C.L."/>
            <person name="Nunes L.R."/>
            <person name="de Oliveira R.C."/>
            <person name="Pereira G.G."/>
            <person name="Reis M.S."/>
            <person name="Schriefer A."/>
            <person name="Siqueira W.J."/>
            <person name="Sommer P."/>
            <person name="Tsai S.M."/>
            <person name="Simpson A.J.G."/>
            <person name="Ferro J.A."/>
            <person name="Camargo L.E.A."/>
            <person name="Kitajima J.P."/>
            <person name="Setubal J.C."/>
            <person name="Van Sluys M.A."/>
        </authorList>
    </citation>
    <scope>NUCLEOTIDE SEQUENCE [LARGE SCALE GENOMIC DNA]</scope>
    <source>
        <strain>Fiocruz L1-130</strain>
    </source>
</reference>
<gene>
    <name evidence="1" type="primary">purC</name>
    <name type="ordered locus">LIC_10679</name>
</gene>
<protein>
    <recommendedName>
        <fullName evidence="1">Phosphoribosylaminoimidazole-succinocarboxamide synthase</fullName>
        <ecNumber evidence="1">6.3.2.6</ecNumber>
    </recommendedName>
    <alternativeName>
        <fullName evidence="1">SAICAR synthetase</fullName>
    </alternativeName>
</protein>
<keyword id="KW-0067">ATP-binding</keyword>
<keyword id="KW-0436">Ligase</keyword>
<keyword id="KW-0547">Nucleotide-binding</keyword>
<keyword id="KW-0658">Purine biosynthesis</keyword>
<sequence length="285" mass="32472">MNPSYKGKVRDIYDLGDKLILSSSDRISAFDVVFPQLVPDKGKVLNRISVSWFEFFKDVPNHILETDVKYFPIPFQNHPDLEGRSVLVKKCKRIDYECVVRGYISGSGWKEYKNDGTLAGIKLPSGFKESQKLPEPVFTPAVKNDQGHDENISEKEMENRIGKELFNILKEKSISIFLRASEVVDKAGIILCDTKFEFGILDGQVILIDELLTPDSSRYWSTDTYSVGISPPSLDKQILRNYLETTSWNKMPPAPNLPAELIQELREKYQKIEDLILSCTSQKSK</sequence>